<evidence type="ECO:0000255" key="1">
    <source>
        <dbReference type="HAMAP-Rule" id="MF_01043"/>
    </source>
</evidence>
<comment type="function">
    <text evidence="1">Catalyzes the transfer of an acyl group from acyl-phosphate (acyl-PO(4)) to glycerol-3-phosphate (G3P) to form lysophosphatidic acid (LPA). This enzyme utilizes acyl-phosphate as fatty acyl donor, but not acyl-CoA or acyl-ACP.</text>
</comment>
<comment type="catalytic activity">
    <reaction evidence="1">
        <text>an acyl phosphate + sn-glycerol 3-phosphate = a 1-acyl-sn-glycero-3-phosphate + phosphate</text>
        <dbReference type="Rhea" id="RHEA:34075"/>
        <dbReference type="ChEBI" id="CHEBI:43474"/>
        <dbReference type="ChEBI" id="CHEBI:57597"/>
        <dbReference type="ChEBI" id="CHEBI:57970"/>
        <dbReference type="ChEBI" id="CHEBI:59918"/>
        <dbReference type="EC" id="2.3.1.275"/>
    </reaction>
</comment>
<comment type="pathway">
    <text evidence="1">Lipid metabolism; phospholipid metabolism.</text>
</comment>
<comment type="subunit">
    <text evidence="1">Probably interacts with PlsX.</text>
</comment>
<comment type="subcellular location">
    <subcellularLocation>
        <location evidence="1">Cell inner membrane</location>
        <topology evidence="1">Multi-pass membrane protein</topology>
    </subcellularLocation>
</comment>
<comment type="similarity">
    <text evidence="1">Belongs to the PlsY family.</text>
</comment>
<organism>
    <name type="scientific">Bartonella quintana (strain Toulouse)</name>
    <name type="common">Rochalimaea quintana</name>
    <dbReference type="NCBI Taxonomy" id="283165"/>
    <lineage>
        <taxon>Bacteria</taxon>
        <taxon>Pseudomonadati</taxon>
        <taxon>Pseudomonadota</taxon>
        <taxon>Alphaproteobacteria</taxon>
        <taxon>Hyphomicrobiales</taxon>
        <taxon>Bartonellaceae</taxon>
        <taxon>Bartonella</taxon>
    </lineage>
</organism>
<gene>
    <name evidence="1" type="primary">plsY</name>
    <name type="ordered locus">BQ06400</name>
</gene>
<accession>Q6FZS3</accession>
<sequence>MNESETLLQFYTWSIFLMSYLIGSIPFGLLFTRLAKLGDVRAIGSGNIGATNVLRTGNKKVATLTLLCDILKGTVVVLVIKFLNDPIENSIIISLVGFFAFLGHLFPIWLKFKGGKGVATYLGVCLGYYWPAAIVFIIVWIMFFILTRYSSLSALIAVIITPIFVYFSYPHLYAHCILVMMSIFVIIKHHANIARLLIGKESKIGTQNRDK</sequence>
<feature type="chain" id="PRO_0000188330" description="Glycerol-3-phosphate acyltransferase">
    <location>
        <begin position="1"/>
        <end position="211"/>
    </location>
</feature>
<feature type="transmembrane region" description="Helical" evidence="1">
    <location>
        <begin position="10"/>
        <end position="30"/>
    </location>
</feature>
<feature type="transmembrane region" description="Helical" evidence="1">
    <location>
        <begin position="63"/>
        <end position="83"/>
    </location>
</feature>
<feature type="transmembrane region" description="Helical" evidence="1">
    <location>
        <begin position="90"/>
        <end position="110"/>
    </location>
</feature>
<feature type="transmembrane region" description="Helical" evidence="1">
    <location>
        <begin position="126"/>
        <end position="146"/>
    </location>
</feature>
<feature type="transmembrane region" description="Helical" evidence="1">
    <location>
        <begin position="152"/>
        <end position="172"/>
    </location>
</feature>
<feature type="transmembrane region" description="Helical" evidence="1">
    <location>
        <begin position="174"/>
        <end position="194"/>
    </location>
</feature>
<proteinExistence type="inferred from homology"/>
<dbReference type="EC" id="2.3.1.275" evidence="1"/>
<dbReference type="EMBL" id="BX897700">
    <property type="protein sequence ID" value="CAF26131.1"/>
    <property type="molecule type" value="Genomic_DNA"/>
</dbReference>
<dbReference type="RefSeq" id="WP_011179394.1">
    <property type="nucleotide sequence ID" value="NC_005955.1"/>
</dbReference>
<dbReference type="SMR" id="Q6FZS3"/>
<dbReference type="KEGG" id="bqu:BQ06400"/>
<dbReference type="eggNOG" id="COG0344">
    <property type="taxonomic scope" value="Bacteria"/>
</dbReference>
<dbReference type="HOGENOM" id="CLU_081254_1_0_5"/>
<dbReference type="OrthoDB" id="9777124at2"/>
<dbReference type="UniPathway" id="UPA00085"/>
<dbReference type="Proteomes" id="UP000000597">
    <property type="component" value="Chromosome"/>
</dbReference>
<dbReference type="GO" id="GO:0005886">
    <property type="term" value="C:plasma membrane"/>
    <property type="evidence" value="ECO:0007669"/>
    <property type="project" value="UniProtKB-SubCell"/>
</dbReference>
<dbReference type="GO" id="GO:0043772">
    <property type="term" value="F:acyl-phosphate glycerol-3-phosphate acyltransferase activity"/>
    <property type="evidence" value="ECO:0007669"/>
    <property type="project" value="UniProtKB-UniRule"/>
</dbReference>
<dbReference type="GO" id="GO:0008654">
    <property type="term" value="P:phospholipid biosynthetic process"/>
    <property type="evidence" value="ECO:0007669"/>
    <property type="project" value="UniProtKB-UniRule"/>
</dbReference>
<dbReference type="HAMAP" id="MF_01043">
    <property type="entry name" value="PlsY"/>
    <property type="match status" value="1"/>
</dbReference>
<dbReference type="InterPro" id="IPR003811">
    <property type="entry name" value="G3P_acylTferase_PlsY"/>
</dbReference>
<dbReference type="NCBIfam" id="TIGR00023">
    <property type="entry name" value="glycerol-3-phosphate 1-O-acyltransferase PlsY"/>
    <property type="match status" value="1"/>
</dbReference>
<dbReference type="PANTHER" id="PTHR30309:SF0">
    <property type="entry name" value="GLYCEROL-3-PHOSPHATE ACYLTRANSFERASE-RELATED"/>
    <property type="match status" value="1"/>
</dbReference>
<dbReference type="PANTHER" id="PTHR30309">
    <property type="entry name" value="INNER MEMBRANE PROTEIN YGIH"/>
    <property type="match status" value="1"/>
</dbReference>
<dbReference type="Pfam" id="PF02660">
    <property type="entry name" value="G3P_acyltransf"/>
    <property type="match status" value="1"/>
</dbReference>
<dbReference type="SMART" id="SM01207">
    <property type="entry name" value="G3P_acyltransf"/>
    <property type="match status" value="1"/>
</dbReference>
<keyword id="KW-0997">Cell inner membrane</keyword>
<keyword id="KW-1003">Cell membrane</keyword>
<keyword id="KW-0444">Lipid biosynthesis</keyword>
<keyword id="KW-0443">Lipid metabolism</keyword>
<keyword id="KW-0472">Membrane</keyword>
<keyword id="KW-0594">Phospholipid biosynthesis</keyword>
<keyword id="KW-1208">Phospholipid metabolism</keyword>
<keyword id="KW-0808">Transferase</keyword>
<keyword id="KW-0812">Transmembrane</keyword>
<keyword id="KW-1133">Transmembrane helix</keyword>
<protein>
    <recommendedName>
        <fullName evidence="1">Glycerol-3-phosphate acyltransferase</fullName>
    </recommendedName>
    <alternativeName>
        <fullName evidence="1">Acyl-PO4 G3P acyltransferase</fullName>
    </alternativeName>
    <alternativeName>
        <fullName evidence="1">Acyl-phosphate--glycerol-3-phosphate acyltransferase</fullName>
    </alternativeName>
    <alternativeName>
        <fullName evidence="1">G3P acyltransferase</fullName>
        <shortName evidence="1">GPAT</shortName>
        <ecNumber evidence="1">2.3.1.275</ecNumber>
    </alternativeName>
    <alternativeName>
        <fullName evidence="1">Lysophosphatidic acid synthase</fullName>
        <shortName evidence="1">LPA synthase</shortName>
    </alternativeName>
</protein>
<reference key="1">
    <citation type="journal article" date="2004" name="Proc. Natl. Acad. Sci. U.S.A.">
        <title>The louse-borne human pathogen Bartonella quintana is a genomic derivative of the zoonotic agent Bartonella henselae.</title>
        <authorList>
            <person name="Alsmark U.C.M."/>
            <person name="Frank A.C."/>
            <person name="Karlberg E.O."/>
            <person name="Legault B.-A."/>
            <person name="Ardell D.H."/>
            <person name="Canbaeck B."/>
            <person name="Eriksson A.-S."/>
            <person name="Naeslund A.K."/>
            <person name="Handley S.A."/>
            <person name="Huvet M."/>
            <person name="La Scola B."/>
            <person name="Holmberg M."/>
            <person name="Andersson S.G.E."/>
        </authorList>
    </citation>
    <scope>NUCLEOTIDE SEQUENCE [LARGE SCALE GENOMIC DNA]</scope>
    <source>
        <strain>Toulouse</strain>
    </source>
</reference>
<name>PLSY_BARQU</name>